<accession>A1A7K9</accession>
<keyword id="KW-1185">Reference proteome</keyword>
<sequence>MYDNLKSLGITNPEEIDRYSLRQEANNDILKIYFQKDKGEFFAKSVKFKYPRQRKTVVADGVGQGYKEVQEISPNLRYIIDELDQICQRDRSEVDLKRKILDDLRHLESVVTNKISEIEADLEKLTRK</sequence>
<name>YAEH_ECOK1</name>
<reference key="1">
    <citation type="journal article" date="2007" name="J. Bacteriol.">
        <title>The genome sequence of avian pathogenic Escherichia coli strain O1:K1:H7 shares strong similarities with human extraintestinal pathogenic E. coli genomes.</title>
        <authorList>
            <person name="Johnson T.J."/>
            <person name="Kariyawasam S."/>
            <person name="Wannemuehler Y."/>
            <person name="Mangiamele P."/>
            <person name="Johnson S.J."/>
            <person name="Doetkott C."/>
            <person name="Skyberg J.A."/>
            <person name="Lynne A.M."/>
            <person name="Johnson J.R."/>
            <person name="Nolan L.K."/>
        </authorList>
    </citation>
    <scope>NUCLEOTIDE SEQUENCE [LARGE SCALE GENOMIC DNA]</scope>
</reference>
<comment type="similarity">
    <text evidence="1">Belongs to the UPF0325 family.</text>
</comment>
<evidence type="ECO:0000255" key="1">
    <source>
        <dbReference type="HAMAP-Rule" id="MF_01519"/>
    </source>
</evidence>
<proteinExistence type="inferred from homology"/>
<gene>
    <name evidence="1" type="primary">yaeH</name>
    <name type="ordered locus">Ecok1_01550</name>
    <name type="ORF">APECO1_1822</name>
</gene>
<organism>
    <name type="scientific">Escherichia coli O1:K1 / APEC</name>
    <dbReference type="NCBI Taxonomy" id="405955"/>
    <lineage>
        <taxon>Bacteria</taxon>
        <taxon>Pseudomonadati</taxon>
        <taxon>Pseudomonadota</taxon>
        <taxon>Gammaproteobacteria</taxon>
        <taxon>Enterobacterales</taxon>
        <taxon>Enterobacteriaceae</taxon>
        <taxon>Escherichia</taxon>
    </lineage>
</organism>
<dbReference type="EMBL" id="CP000468">
    <property type="protein sequence ID" value="ABI99648.1"/>
    <property type="molecule type" value="Genomic_DNA"/>
</dbReference>
<dbReference type="RefSeq" id="WP_000272188.1">
    <property type="nucleotide sequence ID" value="NZ_CADILS010000027.1"/>
</dbReference>
<dbReference type="SMR" id="A1A7K9"/>
<dbReference type="KEGG" id="ecv:APECO1_1822"/>
<dbReference type="HOGENOM" id="CLU_136774_0_0_6"/>
<dbReference type="Proteomes" id="UP000008216">
    <property type="component" value="Chromosome"/>
</dbReference>
<dbReference type="HAMAP" id="MF_01519">
    <property type="entry name" value="UPF0325"/>
    <property type="match status" value="1"/>
</dbReference>
<dbReference type="InterPro" id="IPR020911">
    <property type="entry name" value="UPF0325"/>
</dbReference>
<dbReference type="NCBIfam" id="NF010213">
    <property type="entry name" value="PRK13677.1"/>
    <property type="match status" value="1"/>
</dbReference>
<dbReference type="Pfam" id="PF11944">
    <property type="entry name" value="DUF3461"/>
    <property type="match status" value="1"/>
</dbReference>
<feature type="chain" id="PRO_0000289318" description="UPF0325 protein YaeH">
    <location>
        <begin position="1"/>
        <end position="128"/>
    </location>
</feature>
<protein>
    <recommendedName>
        <fullName evidence="1">UPF0325 protein YaeH</fullName>
    </recommendedName>
</protein>